<reference key="1">
    <citation type="journal article" date="2001" name="Toxicon">
        <title>Cloning of cDNAs encoding C-type lectins from Elapidae snakes Bungarus fasciatus and Bungarus multicinctus.</title>
        <authorList>
            <person name="Zha H.-G."/>
            <person name="Lee W.-H."/>
            <person name="Zhang Y."/>
        </authorList>
    </citation>
    <scope>NUCLEOTIDE SEQUENCE [MRNA]</scope>
    <source>
        <tissue>Venom gland</tissue>
    </source>
</reference>
<reference key="2">
    <citation type="journal article" date="2007" name="Toxicon">
        <title>Cloning, expression and characterization of two C-type lectins from the venom gland of Bungarus multicinctus.</title>
        <authorList>
            <person name="Lin L.-P."/>
            <person name="Lin Q."/>
            <person name="Wang Y.-Q."/>
        </authorList>
    </citation>
    <scope>NUCLEOTIDE SEQUENCE [MRNA]</scope>
    <scope>FUNCTION</scope>
    <source>
        <tissue>Venom</tissue>
        <tissue>Venom gland</tissue>
    </source>
</reference>
<comment type="function">
    <text evidence="4">Recombinant C-type lectin BML-1 is able to agglutinate erythrocytes. May be a calcium-dependent lectin.</text>
</comment>
<comment type="subunit">
    <text evidence="5">Homodimer; non-covalently linked.</text>
</comment>
<comment type="subcellular location">
    <subcellularLocation>
        <location>Secreted</location>
    </subcellularLocation>
</comment>
<comment type="tissue specificity">
    <text>Expressed by the venom gland.</text>
</comment>
<comment type="similarity">
    <text evidence="5">Belongs to the true venom lectin family.</text>
</comment>
<protein>
    <recommendedName>
        <fullName>C-type lectin BML-1</fullName>
        <shortName>CTL</shortName>
    </recommendedName>
</protein>
<evidence type="ECO:0000250" key="1"/>
<evidence type="ECO:0000255" key="2"/>
<evidence type="ECO:0000255" key="3">
    <source>
        <dbReference type="PROSITE-ProRule" id="PRU00040"/>
    </source>
</evidence>
<evidence type="ECO:0000269" key="4">
    <source>
    </source>
</evidence>
<evidence type="ECO:0000305" key="5"/>
<proteinExistence type="evidence at transcript level"/>
<accession>Q90WI6</accession>
<accession>A1XXJ8</accession>
<keyword id="KW-0106">Calcium</keyword>
<keyword id="KW-1015">Disulfide bond</keyword>
<keyword id="KW-0325">Glycoprotein</keyword>
<keyword id="KW-0348">Hemagglutinin</keyword>
<keyword id="KW-0430">Lectin</keyword>
<keyword id="KW-0479">Metal-binding</keyword>
<keyword id="KW-0964">Secreted</keyword>
<keyword id="KW-0732">Signal</keyword>
<sequence length="158" mass="18706">MGHFTFTGLCLLAMFLSLRGAECYTCPIDWLPKNGLCYKVFSKHKTWFDAEKYCRKFKPGCHLASLHSNADAVEFSEYISDYLTGRGHVWIGLRDTKKKYIWEWTDRSRTDFLPWRKNQPDHFNNNEFCVEIVNFTGYLQWNDDNCAALRPFLCQCKY</sequence>
<dbReference type="EMBL" id="AF354272">
    <property type="protein sequence ID" value="AAK43586.1"/>
    <property type="molecule type" value="mRNA"/>
</dbReference>
<dbReference type="EMBL" id="DQ787089">
    <property type="protein sequence ID" value="ABH05180.1"/>
    <property type="molecule type" value="mRNA"/>
</dbReference>
<dbReference type="SMR" id="Q90WI6"/>
<dbReference type="GO" id="GO:0005576">
    <property type="term" value="C:extracellular region"/>
    <property type="evidence" value="ECO:0007669"/>
    <property type="project" value="UniProtKB-SubCell"/>
</dbReference>
<dbReference type="GO" id="GO:0030246">
    <property type="term" value="F:carbohydrate binding"/>
    <property type="evidence" value="ECO:0007669"/>
    <property type="project" value="UniProtKB-KW"/>
</dbReference>
<dbReference type="GO" id="GO:0046872">
    <property type="term" value="F:metal ion binding"/>
    <property type="evidence" value="ECO:0007669"/>
    <property type="project" value="UniProtKB-KW"/>
</dbReference>
<dbReference type="CDD" id="cd03594">
    <property type="entry name" value="CLECT_REG-1_like"/>
    <property type="match status" value="1"/>
</dbReference>
<dbReference type="FunFam" id="3.10.100.10:FF:000015">
    <property type="entry name" value="C-type lectin Cal"/>
    <property type="match status" value="1"/>
</dbReference>
<dbReference type="Gene3D" id="3.10.100.10">
    <property type="entry name" value="Mannose-Binding Protein A, subunit A"/>
    <property type="match status" value="1"/>
</dbReference>
<dbReference type="InterPro" id="IPR001304">
    <property type="entry name" value="C-type_lectin-like"/>
</dbReference>
<dbReference type="InterPro" id="IPR016186">
    <property type="entry name" value="C-type_lectin-like/link_sf"/>
</dbReference>
<dbReference type="InterPro" id="IPR050111">
    <property type="entry name" value="C-type_lectin/snaclec_domain"/>
</dbReference>
<dbReference type="InterPro" id="IPR018378">
    <property type="entry name" value="C-type_lectin_CS"/>
</dbReference>
<dbReference type="InterPro" id="IPR016187">
    <property type="entry name" value="CTDL_fold"/>
</dbReference>
<dbReference type="PANTHER" id="PTHR22803">
    <property type="entry name" value="MANNOSE, PHOSPHOLIPASE, LECTIN RECEPTOR RELATED"/>
    <property type="match status" value="1"/>
</dbReference>
<dbReference type="Pfam" id="PF00059">
    <property type="entry name" value="Lectin_C"/>
    <property type="match status" value="1"/>
</dbReference>
<dbReference type="PRINTS" id="PR01504">
    <property type="entry name" value="PNCREATITSAP"/>
</dbReference>
<dbReference type="SMART" id="SM00034">
    <property type="entry name" value="CLECT"/>
    <property type="match status" value="1"/>
</dbReference>
<dbReference type="SUPFAM" id="SSF56436">
    <property type="entry name" value="C-type lectin-like"/>
    <property type="match status" value="1"/>
</dbReference>
<dbReference type="PROSITE" id="PS00615">
    <property type="entry name" value="C_TYPE_LECTIN_1"/>
    <property type="match status" value="1"/>
</dbReference>
<dbReference type="PROSITE" id="PS50041">
    <property type="entry name" value="C_TYPE_LECTIN_2"/>
    <property type="match status" value="1"/>
</dbReference>
<name>LECG1_BUNMU</name>
<organism>
    <name type="scientific">Bungarus multicinctus</name>
    <name type="common">Many-banded krait</name>
    <dbReference type="NCBI Taxonomy" id="8616"/>
    <lineage>
        <taxon>Eukaryota</taxon>
        <taxon>Metazoa</taxon>
        <taxon>Chordata</taxon>
        <taxon>Craniata</taxon>
        <taxon>Vertebrata</taxon>
        <taxon>Euteleostomi</taxon>
        <taxon>Lepidosauria</taxon>
        <taxon>Squamata</taxon>
        <taxon>Bifurcata</taxon>
        <taxon>Unidentata</taxon>
        <taxon>Episquamata</taxon>
        <taxon>Toxicofera</taxon>
        <taxon>Serpentes</taxon>
        <taxon>Colubroidea</taxon>
        <taxon>Elapidae</taxon>
        <taxon>Bungarinae</taxon>
        <taxon>Bungarus</taxon>
    </lineage>
</organism>
<feature type="signal peptide" evidence="2">
    <location>
        <begin position="1"/>
        <end position="23"/>
    </location>
</feature>
<feature type="chain" id="PRO_0000355260" description="C-type lectin BML-1">
    <location>
        <begin position="24"/>
        <end position="158"/>
    </location>
</feature>
<feature type="domain" description="C-type lectin" evidence="3">
    <location>
        <begin position="33"/>
        <end position="155"/>
    </location>
</feature>
<feature type="short sequence motif" description="Galactose-binding">
    <location>
        <begin position="119"/>
        <end position="121"/>
    </location>
</feature>
<feature type="binding site" evidence="1">
    <location>
        <position position="119"/>
    </location>
    <ligand>
        <name>Ca(2+)</name>
        <dbReference type="ChEBI" id="CHEBI:29108"/>
    </ligand>
</feature>
<feature type="binding site" evidence="1">
    <location>
        <position position="121"/>
    </location>
    <ligand>
        <name>Ca(2+)</name>
        <dbReference type="ChEBI" id="CHEBI:29108"/>
    </ligand>
</feature>
<feature type="binding site" evidence="1">
    <location>
        <position position="127"/>
    </location>
    <ligand>
        <name>Ca(2+)</name>
        <dbReference type="ChEBI" id="CHEBI:29108"/>
    </ligand>
</feature>
<feature type="binding site" evidence="1">
    <location>
        <position position="142"/>
    </location>
    <ligand>
        <name>Ca(2+)</name>
        <dbReference type="ChEBI" id="CHEBI:29108"/>
    </ligand>
</feature>
<feature type="binding site" evidence="1">
    <location>
        <position position="143"/>
    </location>
    <ligand>
        <name>Ca(2+)</name>
        <dbReference type="ChEBI" id="CHEBI:29108"/>
    </ligand>
</feature>
<feature type="glycosylation site" description="N-linked (GlcNAc...) asparagine" evidence="2">
    <location>
        <position position="134"/>
    </location>
</feature>
<feature type="disulfide bond" evidence="3">
    <location>
        <begin position="26"/>
        <end position="37"/>
    </location>
</feature>
<feature type="disulfide bond" evidence="3">
    <location>
        <begin position="54"/>
        <end position="154"/>
    </location>
</feature>
<feature type="disulfide bond" evidence="3">
    <location>
        <begin position="61"/>
        <end position="156"/>
    </location>
</feature>
<feature type="disulfide bond" evidence="3">
    <location>
        <begin position="129"/>
        <end position="146"/>
    </location>
</feature>
<feature type="sequence conflict" description="In Ref. 2; ABH05180." evidence="5" ref="2">
    <original>A</original>
    <variation>D</variation>
    <location>
        <position position="148"/>
    </location>
</feature>